<keyword id="KW-0143">Chaperone</keyword>
<keyword id="KW-0963">Cytoplasm</keyword>
<keyword id="KW-0235">DNA replication</keyword>
<keyword id="KW-0479">Metal-binding</keyword>
<keyword id="KW-0677">Repeat</keyword>
<keyword id="KW-0346">Stress response</keyword>
<keyword id="KW-0862">Zinc</keyword>
<keyword id="KW-0863">Zinc-finger</keyword>
<comment type="function">
    <text evidence="1">Participates actively in the response to hyperosmotic and heat shock by preventing the aggregation of stress-denatured proteins and by disaggregating proteins, also in an autonomous, DnaK-independent fashion. Unfolded proteins bind initially to DnaJ; upon interaction with the DnaJ-bound protein, DnaK hydrolyzes its bound ATP, resulting in the formation of a stable complex. GrpE releases ADP from DnaK; ATP binding to DnaK triggers the release of the substrate protein, thus completing the reaction cycle. Several rounds of ATP-dependent interactions between DnaJ, DnaK and GrpE are required for fully efficient folding. Also involved, together with DnaK and GrpE, in the DNA replication of plasmids through activation of initiation proteins.</text>
</comment>
<comment type="cofactor">
    <cofactor evidence="1">
        <name>Zn(2+)</name>
        <dbReference type="ChEBI" id="CHEBI:29105"/>
    </cofactor>
    <text evidence="1">Binds 2 Zn(2+) ions per monomer.</text>
</comment>
<comment type="subunit">
    <text evidence="1">Homodimer.</text>
</comment>
<comment type="subcellular location">
    <subcellularLocation>
        <location evidence="1">Cytoplasm</location>
    </subcellularLocation>
</comment>
<comment type="domain">
    <text evidence="1">The J domain is necessary and sufficient to stimulate DnaK ATPase activity. Zinc center 1 plays an important role in the autonomous, DnaK-independent chaperone activity of DnaJ. Zinc center 2 is essential for interaction with DnaK and for DnaJ activity.</text>
</comment>
<comment type="similarity">
    <text evidence="1">Belongs to the DnaJ family.</text>
</comment>
<reference key="1">
    <citation type="journal article" date="2000" name="DNA Res.">
        <title>Complete genome structure of the nitrogen-fixing symbiotic bacterium Mesorhizobium loti.</title>
        <authorList>
            <person name="Kaneko T."/>
            <person name="Nakamura Y."/>
            <person name="Sato S."/>
            <person name="Asamizu E."/>
            <person name="Kato T."/>
            <person name="Sasamoto S."/>
            <person name="Watanabe A."/>
            <person name="Idesawa K."/>
            <person name="Ishikawa A."/>
            <person name="Kawashima K."/>
            <person name="Kimura T."/>
            <person name="Kishida Y."/>
            <person name="Kiyokawa C."/>
            <person name="Kohara M."/>
            <person name="Matsumoto M."/>
            <person name="Matsuno A."/>
            <person name="Mochizuki Y."/>
            <person name="Nakayama S."/>
            <person name="Nakazaki N."/>
            <person name="Shimpo S."/>
            <person name="Sugimoto M."/>
            <person name="Takeuchi C."/>
            <person name="Yamada M."/>
            <person name="Tabata S."/>
        </authorList>
    </citation>
    <scope>NUCLEOTIDE SEQUENCE [LARGE SCALE GENOMIC DNA]</scope>
    <source>
        <strain>LMG 29417 / CECT 9101 / MAFF 303099</strain>
    </source>
</reference>
<gene>
    <name evidence="1" type="primary">dnaJ</name>
    <name type="ordered locus">mll4755</name>
</gene>
<sequence>MKADFYETLGVQKGADEKELKSAFRKLAMQFHPDRNPGDHSCEHKFKEINEAYETLKDPQKRAAYDRFGHAAFEQGGMNGGAQGFGAGGFADIFEDIFGDMMGGRQRRSSGGRERGADLRYNMEISLEEAFAGKTAQIRVPASISCTECSGSGAKPGTQPVTCSMCHGHGKVRATQGFFSIERTCPQCQGRGQTIKDPCPKCAGQGRVTEERSLSVNIPAGIEDGTRIRLANEGEAGLRGGPSGDLYIFLAVKPHEFFQRDGADLYCKVPISMTTAALGGSFEVTTLDGTQTKVKVPEGTQNGRQFRLKGKGMPVLRQPNVGDLYIQTAVETPQNLSRRQRELLEEFEQLSSQDNSPQSSGFFARMKDFFESFGER</sequence>
<name>DNAJ_RHILO</name>
<proteinExistence type="inferred from homology"/>
<protein>
    <recommendedName>
        <fullName evidence="1">Chaperone protein DnaJ</fullName>
    </recommendedName>
</protein>
<accession>Q98DD2</accession>
<dbReference type="EMBL" id="BA000012">
    <property type="protein sequence ID" value="BAB51339.1"/>
    <property type="molecule type" value="Genomic_DNA"/>
</dbReference>
<dbReference type="RefSeq" id="WP_010912681.1">
    <property type="nucleotide sequence ID" value="NC_002678.2"/>
</dbReference>
<dbReference type="SMR" id="Q98DD2"/>
<dbReference type="GeneID" id="66680966"/>
<dbReference type="KEGG" id="mlo:mll4755"/>
<dbReference type="eggNOG" id="COG0484">
    <property type="taxonomic scope" value="Bacteria"/>
</dbReference>
<dbReference type="HOGENOM" id="CLU_017633_0_7_5"/>
<dbReference type="Proteomes" id="UP000000552">
    <property type="component" value="Chromosome"/>
</dbReference>
<dbReference type="GO" id="GO:0005737">
    <property type="term" value="C:cytoplasm"/>
    <property type="evidence" value="ECO:0007669"/>
    <property type="project" value="UniProtKB-SubCell"/>
</dbReference>
<dbReference type="GO" id="GO:0005524">
    <property type="term" value="F:ATP binding"/>
    <property type="evidence" value="ECO:0007669"/>
    <property type="project" value="InterPro"/>
</dbReference>
<dbReference type="GO" id="GO:0031072">
    <property type="term" value="F:heat shock protein binding"/>
    <property type="evidence" value="ECO:0007669"/>
    <property type="project" value="InterPro"/>
</dbReference>
<dbReference type="GO" id="GO:0051082">
    <property type="term" value="F:unfolded protein binding"/>
    <property type="evidence" value="ECO:0007669"/>
    <property type="project" value="UniProtKB-UniRule"/>
</dbReference>
<dbReference type="GO" id="GO:0008270">
    <property type="term" value="F:zinc ion binding"/>
    <property type="evidence" value="ECO:0007669"/>
    <property type="project" value="UniProtKB-UniRule"/>
</dbReference>
<dbReference type="GO" id="GO:0051085">
    <property type="term" value="P:chaperone cofactor-dependent protein refolding"/>
    <property type="evidence" value="ECO:0007669"/>
    <property type="project" value="TreeGrafter"/>
</dbReference>
<dbReference type="GO" id="GO:0006260">
    <property type="term" value="P:DNA replication"/>
    <property type="evidence" value="ECO:0007669"/>
    <property type="project" value="UniProtKB-KW"/>
</dbReference>
<dbReference type="GO" id="GO:0042026">
    <property type="term" value="P:protein refolding"/>
    <property type="evidence" value="ECO:0007669"/>
    <property type="project" value="TreeGrafter"/>
</dbReference>
<dbReference type="GO" id="GO:0009408">
    <property type="term" value="P:response to heat"/>
    <property type="evidence" value="ECO:0007669"/>
    <property type="project" value="InterPro"/>
</dbReference>
<dbReference type="CDD" id="cd06257">
    <property type="entry name" value="DnaJ"/>
    <property type="match status" value="1"/>
</dbReference>
<dbReference type="CDD" id="cd10747">
    <property type="entry name" value="DnaJ_C"/>
    <property type="match status" value="1"/>
</dbReference>
<dbReference type="CDD" id="cd10719">
    <property type="entry name" value="DnaJ_zf"/>
    <property type="match status" value="1"/>
</dbReference>
<dbReference type="FunFam" id="1.10.287.110:FF:000034">
    <property type="entry name" value="Chaperone protein DnaJ"/>
    <property type="match status" value="1"/>
</dbReference>
<dbReference type="FunFam" id="2.10.230.10:FF:000002">
    <property type="entry name" value="Molecular chaperone DnaJ"/>
    <property type="match status" value="1"/>
</dbReference>
<dbReference type="FunFam" id="2.60.260.20:FF:000004">
    <property type="entry name" value="Molecular chaperone DnaJ"/>
    <property type="match status" value="1"/>
</dbReference>
<dbReference type="Gene3D" id="1.10.287.110">
    <property type="entry name" value="DnaJ domain"/>
    <property type="match status" value="1"/>
</dbReference>
<dbReference type="Gene3D" id="2.10.230.10">
    <property type="entry name" value="Heat shock protein DnaJ, cysteine-rich domain"/>
    <property type="match status" value="1"/>
</dbReference>
<dbReference type="Gene3D" id="2.60.260.20">
    <property type="entry name" value="Urease metallochaperone UreE, N-terminal domain"/>
    <property type="match status" value="2"/>
</dbReference>
<dbReference type="HAMAP" id="MF_01152">
    <property type="entry name" value="DnaJ"/>
    <property type="match status" value="1"/>
</dbReference>
<dbReference type="InterPro" id="IPR012724">
    <property type="entry name" value="DnaJ"/>
</dbReference>
<dbReference type="InterPro" id="IPR002939">
    <property type="entry name" value="DnaJ_C"/>
</dbReference>
<dbReference type="InterPro" id="IPR001623">
    <property type="entry name" value="DnaJ_domain"/>
</dbReference>
<dbReference type="InterPro" id="IPR018253">
    <property type="entry name" value="DnaJ_domain_CS"/>
</dbReference>
<dbReference type="InterPro" id="IPR008971">
    <property type="entry name" value="HSP40/DnaJ_pept-bd"/>
</dbReference>
<dbReference type="InterPro" id="IPR001305">
    <property type="entry name" value="HSP_DnaJ_Cys-rich_dom"/>
</dbReference>
<dbReference type="InterPro" id="IPR036410">
    <property type="entry name" value="HSP_DnaJ_Cys-rich_dom_sf"/>
</dbReference>
<dbReference type="InterPro" id="IPR036869">
    <property type="entry name" value="J_dom_sf"/>
</dbReference>
<dbReference type="NCBIfam" id="TIGR02349">
    <property type="entry name" value="DnaJ_bact"/>
    <property type="match status" value="1"/>
</dbReference>
<dbReference type="NCBIfam" id="NF008035">
    <property type="entry name" value="PRK10767.1"/>
    <property type="match status" value="1"/>
</dbReference>
<dbReference type="PANTHER" id="PTHR43096:SF48">
    <property type="entry name" value="CHAPERONE PROTEIN DNAJ"/>
    <property type="match status" value="1"/>
</dbReference>
<dbReference type="PANTHER" id="PTHR43096">
    <property type="entry name" value="DNAJ HOMOLOG 1, MITOCHONDRIAL-RELATED"/>
    <property type="match status" value="1"/>
</dbReference>
<dbReference type="Pfam" id="PF00226">
    <property type="entry name" value="DnaJ"/>
    <property type="match status" value="1"/>
</dbReference>
<dbReference type="Pfam" id="PF01556">
    <property type="entry name" value="DnaJ_C"/>
    <property type="match status" value="1"/>
</dbReference>
<dbReference type="Pfam" id="PF00684">
    <property type="entry name" value="DnaJ_CXXCXGXG"/>
    <property type="match status" value="1"/>
</dbReference>
<dbReference type="PRINTS" id="PR00625">
    <property type="entry name" value="JDOMAIN"/>
</dbReference>
<dbReference type="SMART" id="SM00271">
    <property type="entry name" value="DnaJ"/>
    <property type="match status" value="1"/>
</dbReference>
<dbReference type="SUPFAM" id="SSF46565">
    <property type="entry name" value="Chaperone J-domain"/>
    <property type="match status" value="1"/>
</dbReference>
<dbReference type="SUPFAM" id="SSF57938">
    <property type="entry name" value="DnaJ/Hsp40 cysteine-rich domain"/>
    <property type="match status" value="1"/>
</dbReference>
<dbReference type="SUPFAM" id="SSF49493">
    <property type="entry name" value="HSP40/DnaJ peptide-binding domain"/>
    <property type="match status" value="2"/>
</dbReference>
<dbReference type="PROSITE" id="PS00636">
    <property type="entry name" value="DNAJ_1"/>
    <property type="match status" value="1"/>
</dbReference>
<dbReference type="PROSITE" id="PS50076">
    <property type="entry name" value="DNAJ_2"/>
    <property type="match status" value="1"/>
</dbReference>
<dbReference type="PROSITE" id="PS51188">
    <property type="entry name" value="ZF_CR"/>
    <property type="match status" value="1"/>
</dbReference>
<organism>
    <name type="scientific">Mesorhizobium japonicum (strain LMG 29417 / CECT 9101 / MAFF 303099)</name>
    <name type="common">Mesorhizobium loti (strain MAFF 303099)</name>
    <dbReference type="NCBI Taxonomy" id="266835"/>
    <lineage>
        <taxon>Bacteria</taxon>
        <taxon>Pseudomonadati</taxon>
        <taxon>Pseudomonadota</taxon>
        <taxon>Alphaproteobacteria</taxon>
        <taxon>Hyphomicrobiales</taxon>
        <taxon>Phyllobacteriaceae</taxon>
        <taxon>Mesorhizobium</taxon>
    </lineage>
</organism>
<feature type="chain" id="PRO_0000070864" description="Chaperone protein DnaJ">
    <location>
        <begin position="1"/>
        <end position="376"/>
    </location>
</feature>
<feature type="domain" description="J" evidence="1">
    <location>
        <begin position="4"/>
        <end position="69"/>
    </location>
</feature>
<feature type="repeat" description="CXXCXGXG motif">
    <location>
        <begin position="146"/>
        <end position="153"/>
    </location>
</feature>
<feature type="repeat" description="CXXCXGXG motif">
    <location>
        <begin position="163"/>
        <end position="170"/>
    </location>
</feature>
<feature type="repeat" description="CXXCXGXG motif">
    <location>
        <begin position="185"/>
        <end position="192"/>
    </location>
</feature>
<feature type="repeat" description="CXXCXGXG motif">
    <location>
        <begin position="199"/>
        <end position="206"/>
    </location>
</feature>
<feature type="zinc finger region" description="CR-type" evidence="1">
    <location>
        <begin position="133"/>
        <end position="211"/>
    </location>
</feature>
<feature type="binding site" evidence="1">
    <location>
        <position position="146"/>
    </location>
    <ligand>
        <name>Zn(2+)</name>
        <dbReference type="ChEBI" id="CHEBI:29105"/>
        <label>1</label>
    </ligand>
</feature>
<feature type="binding site" evidence="1">
    <location>
        <position position="149"/>
    </location>
    <ligand>
        <name>Zn(2+)</name>
        <dbReference type="ChEBI" id="CHEBI:29105"/>
        <label>1</label>
    </ligand>
</feature>
<feature type="binding site" evidence="1">
    <location>
        <position position="163"/>
    </location>
    <ligand>
        <name>Zn(2+)</name>
        <dbReference type="ChEBI" id="CHEBI:29105"/>
        <label>2</label>
    </ligand>
</feature>
<feature type="binding site" evidence="1">
    <location>
        <position position="166"/>
    </location>
    <ligand>
        <name>Zn(2+)</name>
        <dbReference type="ChEBI" id="CHEBI:29105"/>
        <label>2</label>
    </ligand>
</feature>
<feature type="binding site" evidence="1">
    <location>
        <position position="185"/>
    </location>
    <ligand>
        <name>Zn(2+)</name>
        <dbReference type="ChEBI" id="CHEBI:29105"/>
        <label>2</label>
    </ligand>
</feature>
<feature type="binding site" evidence="1">
    <location>
        <position position="188"/>
    </location>
    <ligand>
        <name>Zn(2+)</name>
        <dbReference type="ChEBI" id="CHEBI:29105"/>
        <label>2</label>
    </ligand>
</feature>
<feature type="binding site" evidence="1">
    <location>
        <position position="199"/>
    </location>
    <ligand>
        <name>Zn(2+)</name>
        <dbReference type="ChEBI" id="CHEBI:29105"/>
        <label>1</label>
    </ligand>
</feature>
<feature type="binding site" evidence="1">
    <location>
        <position position="202"/>
    </location>
    <ligand>
        <name>Zn(2+)</name>
        <dbReference type="ChEBI" id="CHEBI:29105"/>
        <label>1</label>
    </ligand>
</feature>
<evidence type="ECO:0000255" key="1">
    <source>
        <dbReference type="HAMAP-Rule" id="MF_01152"/>
    </source>
</evidence>